<reference key="1">
    <citation type="journal article" date="1998" name="DNA Res.">
        <title>Cloning of a novel rat gene, DB83, that encodes a putative membrane protein.</title>
        <authorList>
            <person name="Nakadai T."/>
            <person name="Kishimoto T."/>
            <person name="Kokura K."/>
            <person name="Ohkawa N."/>
            <person name="Makino Y."/>
            <person name="Muramatsu M."/>
            <person name="Tamura T."/>
        </authorList>
    </citation>
    <scope>NUCLEOTIDE SEQUENCE [MRNA]</scope>
    <source>
        <tissue>Liver</tissue>
    </source>
</reference>
<gene>
    <name type="primary">Tmem33</name>
    <name type="synonym">Db83</name>
</gene>
<name>TMM33_RAT</name>
<organism>
    <name type="scientific">Rattus norvegicus</name>
    <name type="common">Rat</name>
    <dbReference type="NCBI Taxonomy" id="10116"/>
    <lineage>
        <taxon>Eukaryota</taxon>
        <taxon>Metazoa</taxon>
        <taxon>Chordata</taxon>
        <taxon>Craniata</taxon>
        <taxon>Vertebrata</taxon>
        <taxon>Euteleostomi</taxon>
        <taxon>Mammalia</taxon>
        <taxon>Eutheria</taxon>
        <taxon>Euarchontoglires</taxon>
        <taxon>Glires</taxon>
        <taxon>Rodentia</taxon>
        <taxon>Myomorpha</taxon>
        <taxon>Muroidea</taxon>
        <taxon>Muridae</taxon>
        <taxon>Murinae</taxon>
        <taxon>Rattus</taxon>
    </lineage>
</organism>
<feature type="initiator methionine" description="Removed" evidence="1">
    <location>
        <position position="1"/>
    </location>
</feature>
<feature type="chain" id="PRO_0000220901" description="Transmembrane protein 33">
    <location>
        <begin position="2"/>
        <end position="247"/>
    </location>
</feature>
<feature type="topological domain" description="Lumenal" evidence="4">
    <location>
        <begin position="2"/>
        <end position="31"/>
    </location>
</feature>
<feature type="transmembrane region" description="Helical" evidence="3">
    <location>
        <begin position="32"/>
        <end position="52"/>
    </location>
</feature>
<feature type="topological domain" description="Cytoplasmic" evidence="4">
    <location>
        <begin position="53"/>
        <end position="100"/>
    </location>
</feature>
<feature type="transmembrane region" description="Helical" evidence="3">
    <location>
        <begin position="101"/>
        <end position="121"/>
    </location>
</feature>
<feature type="topological domain" description="Lumenal" evidence="4">
    <location>
        <begin position="122"/>
        <end position="155"/>
    </location>
</feature>
<feature type="transmembrane region" description="Helical" evidence="3">
    <location>
        <begin position="156"/>
        <end position="176"/>
    </location>
</feature>
<feature type="topological domain" description="Cytoplasmic" evidence="4">
    <location>
        <begin position="177"/>
        <end position="247"/>
    </location>
</feature>
<feature type="modified residue" description="N-acetylalanine" evidence="1">
    <location>
        <position position="2"/>
    </location>
</feature>
<sequence length="247" mass="27983">MADTTPNGPQGAGAVQFMMTNKLDTAMWLSRLFTVYCSALFVLPLLGLHEAASFYQRALLANALTSALRLHQRLPHFQLSRAFLAQALLEDSCHYLLYSLIFVNSYPVTMSIFPVLLFSLLHAATYTKKVLDAKGSNSLPLLRSVLDKLSTNQQNILKFIACNEIFLMPATVFMLFSGQGSLLQPFIYYRFLTLRYSSRRNPYCRNLFNELRIVVEHIIMKPSCPLFVRRLCLQSIAFISRLAPTVA</sequence>
<evidence type="ECO:0000250" key="1">
    <source>
        <dbReference type="UniProtKB" id="P57088"/>
    </source>
</evidence>
<evidence type="ECO:0000250" key="2">
    <source>
        <dbReference type="UniProtKB" id="Q9CR67"/>
    </source>
</evidence>
<evidence type="ECO:0000255" key="3"/>
<evidence type="ECO:0000305" key="4"/>
<keyword id="KW-0007">Acetylation</keyword>
<keyword id="KW-0256">Endoplasmic reticulum</keyword>
<keyword id="KW-0391">Immunity</keyword>
<keyword id="KW-0399">Innate immunity</keyword>
<keyword id="KW-0472">Membrane</keyword>
<keyword id="KW-0539">Nucleus</keyword>
<keyword id="KW-1185">Reference proteome</keyword>
<keyword id="KW-0812">Transmembrane</keyword>
<keyword id="KW-1133">Transmembrane helix</keyword>
<protein>
    <recommendedName>
        <fullName>Transmembrane protein 33</fullName>
    </recommendedName>
    <alternativeName>
        <fullName>Protein DB83</fullName>
    </alternativeName>
</protein>
<accession>Q9Z142</accession>
<dbReference type="EMBL" id="AB006135">
    <property type="protein sequence ID" value="BAA75068.1"/>
    <property type="molecule type" value="mRNA"/>
</dbReference>
<dbReference type="PIR" id="JE0307">
    <property type="entry name" value="JE0307"/>
</dbReference>
<dbReference type="RefSeq" id="NP_067703.1">
    <property type="nucleotide sequence ID" value="NM_021671.5"/>
</dbReference>
<dbReference type="BioGRID" id="248752">
    <property type="interactions" value="1"/>
</dbReference>
<dbReference type="FunCoup" id="Q9Z142">
    <property type="interactions" value="2842"/>
</dbReference>
<dbReference type="IntAct" id="Q9Z142">
    <property type="interactions" value="2"/>
</dbReference>
<dbReference type="MINT" id="Q9Z142"/>
<dbReference type="STRING" id="10116.ENSRNOP00000003128"/>
<dbReference type="PhosphoSitePlus" id="Q9Z142"/>
<dbReference type="jPOST" id="Q9Z142"/>
<dbReference type="PaxDb" id="10116-ENSRNOP00000003128"/>
<dbReference type="Ensembl" id="ENSRNOT00000110302.1">
    <property type="protein sequence ID" value="ENSRNOP00000097007.1"/>
    <property type="gene ID" value="ENSRNOG00000002254.7"/>
</dbReference>
<dbReference type="GeneID" id="59303"/>
<dbReference type="KEGG" id="rno:59303"/>
<dbReference type="UCSC" id="RGD:708371">
    <property type="organism name" value="rat"/>
</dbReference>
<dbReference type="AGR" id="RGD:708371"/>
<dbReference type="CTD" id="55161"/>
<dbReference type="RGD" id="708371">
    <property type="gene designation" value="Tmem33"/>
</dbReference>
<dbReference type="eggNOG" id="KOG4002">
    <property type="taxonomic scope" value="Eukaryota"/>
</dbReference>
<dbReference type="GeneTree" id="ENSGT00390000011368"/>
<dbReference type="HOGENOM" id="CLU_071391_0_0_1"/>
<dbReference type="InParanoid" id="Q9Z142"/>
<dbReference type="OMA" id="FFSIRPT"/>
<dbReference type="OrthoDB" id="5581259at2759"/>
<dbReference type="PhylomeDB" id="Q9Z142"/>
<dbReference type="TreeFam" id="TF314068"/>
<dbReference type="PRO" id="PR:Q9Z142"/>
<dbReference type="Proteomes" id="UP000002494">
    <property type="component" value="Chromosome 14"/>
</dbReference>
<dbReference type="GO" id="GO:0005783">
    <property type="term" value="C:endoplasmic reticulum"/>
    <property type="evidence" value="ECO:0000266"/>
    <property type="project" value="RGD"/>
</dbReference>
<dbReference type="GO" id="GO:0005789">
    <property type="term" value="C:endoplasmic reticulum membrane"/>
    <property type="evidence" value="ECO:0000250"/>
    <property type="project" value="UniProtKB"/>
</dbReference>
<dbReference type="GO" id="GO:0042470">
    <property type="term" value="C:melanosome"/>
    <property type="evidence" value="ECO:0000266"/>
    <property type="project" value="RGD"/>
</dbReference>
<dbReference type="GO" id="GO:0005635">
    <property type="term" value="C:nuclear envelope"/>
    <property type="evidence" value="ECO:0000266"/>
    <property type="project" value="RGD"/>
</dbReference>
<dbReference type="GO" id="GO:0071786">
    <property type="term" value="P:endoplasmic reticulum tubular network organization"/>
    <property type="evidence" value="ECO:0000318"/>
    <property type="project" value="GO_Central"/>
</dbReference>
<dbReference type="GO" id="GO:0045087">
    <property type="term" value="P:innate immune response"/>
    <property type="evidence" value="ECO:0007669"/>
    <property type="project" value="UniProtKB-KW"/>
</dbReference>
<dbReference type="GO" id="GO:0061024">
    <property type="term" value="P:membrane organization"/>
    <property type="evidence" value="ECO:0000318"/>
    <property type="project" value="GO_Central"/>
</dbReference>
<dbReference type="GO" id="GO:1903896">
    <property type="term" value="P:positive regulation of IRE1-mediated unfolded protein response"/>
    <property type="evidence" value="ECO:0000250"/>
    <property type="project" value="UniProtKB"/>
</dbReference>
<dbReference type="GO" id="GO:1903899">
    <property type="term" value="P:positive regulation of PERK-mediated unfolded protein response"/>
    <property type="evidence" value="ECO:0000250"/>
    <property type="project" value="UniProtKB"/>
</dbReference>
<dbReference type="GO" id="GO:1903371">
    <property type="term" value="P:regulation of endoplasmic reticulum tubular network organization"/>
    <property type="evidence" value="ECO:0000250"/>
    <property type="project" value="UniProtKB"/>
</dbReference>
<dbReference type="GO" id="GO:0034976">
    <property type="term" value="P:response to endoplasmic reticulum stress"/>
    <property type="evidence" value="ECO:0000250"/>
    <property type="project" value="UniProtKB"/>
</dbReference>
<dbReference type="InterPro" id="IPR051645">
    <property type="entry name" value="PER33/POM33_regulator"/>
</dbReference>
<dbReference type="InterPro" id="IPR005344">
    <property type="entry name" value="TMEM33/Pom33"/>
</dbReference>
<dbReference type="PANTHER" id="PTHR12703">
    <property type="entry name" value="TRANSMEMBRANE PROTEIN 33"/>
    <property type="match status" value="1"/>
</dbReference>
<dbReference type="PANTHER" id="PTHR12703:SF4">
    <property type="entry name" value="TRANSMEMBRANE PROTEIN 33"/>
    <property type="match status" value="1"/>
</dbReference>
<dbReference type="Pfam" id="PF03661">
    <property type="entry name" value="TMEM33_Pom33"/>
    <property type="match status" value="1"/>
</dbReference>
<comment type="function">
    <text evidence="1 2">Acts as a regulator of the tubular endoplasmic reticulum (ER) network by modulating intracellular calcium homeostasis. Mechanistically, stimulates PKD2 calcium-dependent activity (By similarity). Suppresses the RTN3/4-induced formation of the ER tubules. Positively regulates PERK-mediated and IRE1-mediated unfolded protein response signaling. Plays an essential role in VEGF-mediated release of Ca(2+) from ER stores during angiogenesis. Also plays a role in the modulation of innate immune signaling through the cGAS-STING pathway by interacting with RNF26. Participates in lipid metabolism by acting as a downstream effector of the pyruvate kinase/PKM. Forms a complex with RNF5 to facilitate polyubiquitination and subsequent degradation of SCAP on the ER membrane (By similarity).</text>
</comment>
<comment type="subunit">
    <text evidence="1 2">Interacts with EIF2AK3. Interacts with ARL6IP1, isoform RTN1-A of RTN1, isoform RTN2-B of RTN2, isoform 3 of RTN3 and isoform 3 of RTN4. Interacts with RNF5. Interacts with RNF26 (By similarity). Interacts with PKD2 (By similarity).</text>
</comment>
<comment type="subcellular location">
    <subcellularLocation>
        <location evidence="1">Endoplasmic reticulum membrane</location>
        <topology evidence="3">Multi-pass membrane protein</topology>
    </subcellularLocation>
    <subcellularLocation>
        <location evidence="1">Melanosome</location>
    </subcellularLocation>
    <subcellularLocation>
        <location evidence="1">Nucleus envelope</location>
    </subcellularLocation>
    <text evidence="1">Co-localizes with RTN4 at the ER sheets.</text>
</comment>
<comment type="tissue specificity">
    <text>Highly expressed in the liver and significantly in brain, lungs and kidneys.</text>
</comment>
<comment type="similarity">
    <text evidence="4">Belongs to the PER33/POM33 family.</text>
</comment>
<proteinExistence type="evidence at transcript level"/>